<organism>
    <name type="scientific">Haemophilus influenzae (strain ATCC 51907 / DSM 11121 / KW20 / Rd)</name>
    <dbReference type="NCBI Taxonomy" id="71421"/>
    <lineage>
        <taxon>Bacteria</taxon>
        <taxon>Pseudomonadati</taxon>
        <taxon>Pseudomonadota</taxon>
        <taxon>Gammaproteobacteria</taxon>
        <taxon>Pasteurellales</taxon>
        <taxon>Pasteurellaceae</taxon>
        <taxon>Haemophilus</taxon>
    </lineage>
</organism>
<accession>O86223</accession>
<comment type="similarity">
    <text evidence="1">Belongs to the IMPDH/GMPR family.</text>
</comment>
<comment type="caution">
    <text evidence="1">Could be the product of a pseudogene. Corresponds to a tandem copy of the C-terminal region of GuaB (HI_0221).</text>
</comment>
<dbReference type="EMBL" id="L42023">
    <property type="protein sequence ID" value="AAC21895.1"/>
    <property type="molecule type" value="Genomic_DNA"/>
</dbReference>
<dbReference type="RefSeq" id="NP_438393.1">
    <property type="nucleotide sequence ID" value="NC_000907.1"/>
</dbReference>
<dbReference type="STRING" id="71421.HI_0221.1"/>
<dbReference type="EnsemblBacteria" id="AAC21895">
    <property type="protein sequence ID" value="AAC21895"/>
    <property type="gene ID" value="HI_0221.1"/>
</dbReference>
<dbReference type="KEGG" id="hin:HI_0221.1"/>
<dbReference type="PATRIC" id="fig|71421.8.peg.234"/>
<dbReference type="eggNOG" id="COG0516">
    <property type="taxonomic scope" value="Bacteria"/>
</dbReference>
<dbReference type="HOGENOM" id="CLU_1624808_0_0_6"/>
<dbReference type="OrthoDB" id="9429638at2"/>
<dbReference type="PhylomeDB" id="O86223"/>
<dbReference type="BioCyc" id="HINF71421:G1GJ1-238-MONOMER"/>
<dbReference type="Proteomes" id="UP000000579">
    <property type="component" value="Chromosome"/>
</dbReference>
<dbReference type="GO" id="GO:0003938">
    <property type="term" value="F:IMP dehydrogenase activity"/>
    <property type="evidence" value="ECO:0007669"/>
    <property type="project" value="InterPro"/>
</dbReference>
<dbReference type="GO" id="GO:0006164">
    <property type="term" value="P:purine nucleotide biosynthetic process"/>
    <property type="evidence" value="ECO:0007669"/>
    <property type="project" value="InterPro"/>
</dbReference>
<dbReference type="Gene3D" id="3.20.20.70">
    <property type="entry name" value="Aldolase class I"/>
    <property type="match status" value="1"/>
</dbReference>
<dbReference type="InterPro" id="IPR013785">
    <property type="entry name" value="Aldolase_TIM"/>
</dbReference>
<dbReference type="InterPro" id="IPR029062">
    <property type="entry name" value="Class_I_gatase-like"/>
</dbReference>
<dbReference type="InterPro" id="IPR005990">
    <property type="entry name" value="IMP_DH"/>
</dbReference>
<dbReference type="InterPro" id="IPR001093">
    <property type="entry name" value="IMP_DH_GMPRt"/>
</dbReference>
<dbReference type="PANTHER" id="PTHR11911:SF111">
    <property type="entry name" value="INOSINE-5'-MONOPHOSPHATE DEHYDROGENASE"/>
    <property type="match status" value="1"/>
</dbReference>
<dbReference type="PANTHER" id="PTHR11911">
    <property type="entry name" value="INOSINE-5-MONOPHOSPHATE DEHYDROGENASE RELATED"/>
    <property type="match status" value="1"/>
</dbReference>
<dbReference type="Pfam" id="PF00478">
    <property type="entry name" value="IMPDH"/>
    <property type="match status" value="1"/>
</dbReference>
<dbReference type="SMART" id="SM01240">
    <property type="entry name" value="IMPDH"/>
    <property type="match status" value="1"/>
</dbReference>
<dbReference type="SUPFAM" id="SSF52317">
    <property type="entry name" value="Class I glutamine amidotransferase-like"/>
    <property type="match status" value="1"/>
</dbReference>
<dbReference type="SUPFAM" id="SSF51412">
    <property type="entry name" value="Inosine monophosphate dehydrogenase (IMPDH)"/>
    <property type="match status" value="1"/>
</dbReference>
<sequence>MTNIHYHKILILDFGSQYTQLIARRVREIGVYCELWAWDVTEQXIREFAPELYQGRAFKSYRGMGSLGAMAKGSSDRYFQSDNAADKLVPEGIEGRIPYKGYLKEIIHQQMGGLRSCMGLTGCATIDELRTKAEFVRISGAGIKESHVHDVAITKEAPNYRMG</sequence>
<proteinExistence type="uncertain"/>
<evidence type="ECO:0000305" key="1"/>
<reference key="1">
    <citation type="journal article" date="1995" name="Science">
        <title>Whole-genome random sequencing and assembly of Haemophilus influenzae Rd.</title>
        <authorList>
            <person name="Fleischmann R.D."/>
            <person name="Adams M.D."/>
            <person name="White O."/>
            <person name="Clayton R.A."/>
            <person name="Kirkness E.F."/>
            <person name="Kerlavage A.R."/>
            <person name="Bult C.J."/>
            <person name="Tomb J.-F."/>
            <person name="Dougherty B.A."/>
            <person name="Merrick J.M."/>
            <person name="McKenney K."/>
            <person name="Sutton G.G."/>
            <person name="FitzHugh W."/>
            <person name="Fields C.A."/>
            <person name="Gocayne J.D."/>
            <person name="Scott J.D."/>
            <person name="Shirley R."/>
            <person name="Liu L.-I."/>
            <person name="Glodek A."/>
            <person name="Kelley J.M."/>
            <person name="Weidman J.F."/>
            <person name="Phillips C.A."/>
            <person name="Spriggs T."/>
            <person name="Hedblom E."/>
            <person name="Cotton M.D."/>
            <person name="Utterback T.R."/>
            <person name="Hanna M.C."/>
            <person name="Nguyen D.T."/>
            <person name="Saudek D.M."/>
            <person name="Brandon R.C."/>
            <person name="Fine L.D."/>
            <person name="Fritchman J.L."/>
            <person name="Fuhrmann J.L."/>
            <person name="Geoghagen N.S.M."/>
            <person name="Gnehm C.L."/>
            <person name="McDonald L.A."/>
            <person name="Small K.V."/>
            <person name="Fraser C.M."/>
            <person name="Smith H.O."/>
            <person name="Venter J.C."/>
        </authorList>
    </citation>
    <scope>NUCLEOTIDE SEQUENCE [LARGE SCALE GENOMIC DNA]</scope>
    <source>
        <strain>ATCC 51907 / DSM 11121 / KW20 / Rd</strain>
    </source>
</reference>
<reference key="2">
    <citation type="submission" date="1998-05" db="EMBL/GenBank/DDBJ databases">
        <authorList>
            <person name="White O."/>
            <person name="Clayton R.A."/>
            <person name="Kerlavage A.R."/>
            <person name="Fleischmann R.D."/>
            <person name="Peterson J."/>
            <person name="Hickey E."/>
            <person name="Dodson R."/>
            <person name="Gwinn M."/>
        </authorList>
    </citation>
    <scope>IDENTIFICATION</scope>
</reference>
<feature type="chain" id="PRO_0000093788" description="Putative uncharacterized protein HI_0221.1">
    <location>
        <begin position="1"/>
        <end position="163"/>
    </location>
</feature>
<keyword id="KW-1185">Reference proteome</keyword>
<gene>
    <name type="ordered locus">HI_0221.1</name>
</gene>
<name>Y221A_HAEIN</name>
<protein>
    <recommendedName>
        <fullName>Putative uncharacterized protein HI_0221.1</fullName>
    </recommendedName>
</protein>